<name>HFQ_ECOLI</name>
<keyword id="KW-0002">3D-structure</keyword>
<keyword id="KW-0963">Cytoplasm</keyword>
<keyword id="KW-0903">Direct protein sequencing</keyword>
<keyword id="KW-0238">DNA-binding</keyword>
<keyword id="KW-1185">Reference proteome</keyword>
<keyword id="KW-0694">RNA-binding</keyword>
<keyword id="KW-0346">Stress response</keyword>
<dbReference type="EMBL" id="D00743">
    <property type="protein sequence ID" value="BAA00644.1"/>
    <property type="molecule type" value="Genomic_DNA"/>
</dbReference>
<dbReference type="EMBL" id="U14003">
    <property type="protein sequence ID" value="AAA97068.1"/>
    <property type="molecule type" value="Genomic_DNA"/>
</dbReference>
<dbReference type="EMBL" id="U00096">
    <property type="protein sequence ID" value="AAC77129.1"/>
    <property type="molecule type" value="Genomic_DNA"/>
</dbReference>
<dbReference type="EMBL" id="AP009048">
    <property type="protein sequence ID" value="BAE78173.1"/>
    <property type="molecule type" value="Genomic_DNA"/>
</dbReference>
<dbReference type="EMBL" id="M63655">
    <property type="protein sequence ID" value="AAA24175.1"/>
    <property type="status" value="ALT_FRAME"/>
    <property type="molecule type" value="Genomic_DNA"/>
</dbReference>
<dbReference type="EMBL" id="U00005">
    <property type="protein sequence ID" value="AAC43397.1"/>
    <property type="molecule type" value="Unassigned_DNA"/>
</dbReference>
<dbReference type="PIR" id="S26832">
    <property type="entry name" value="S56397"/>
</dbReference>
<dbReference type="RefSeq" id="NP_418593.1">
    <property type="nucleotide sequence ID" value="NC_000913.3"/>
</dbReference>
<dbReference type="RefSeq" id="WP_001051883.1">
    <property type="nucleotide sequence ID" value="NZ_STEB01000013.1"/>
</dbReference>
<dbReference type="PDB" id="1HK9">
    <property type="method" value="X-ray"/>
    <property type="resolution" value="2.15 A"/>
    <property type="chains" value="A/B/C/D/E/F=1-72"/>
</dbReference>
<dbReference type="PDB" id="2Y90">
    <property type="method" value="X-ray"/>
    <property type="resolution" value="2.25 A"/>
    <property type="chains" value="A=1-102"/>
</dbReference>
<dbReference type="PDB" id="2YHT">
    <property type="method" value="X-ray"/>
    <property type="resolution" value="2.90 A"/>
    <property type="chains" value="A/B/C/D/E/F/G/H/I/J/K/L=1-72"/>
</dbReference>
<dbReference type="PDB" id="3GIB">
    <property type="method" value="X-ray"/>
    <property type="resolution" value="2.40 A"/>
    <property type="chains" value="A/B/C=2-69"/>
</dbReference>
<dbReference type="PDB" id="3QHS">
    <property type="method" value="X-ray"/>
    <property type="resolution" value="2.85 A"/>
    <property type="chains" value="A/B/C/D/E/F/G/H/I/J/K/L=1-102"/>
</dbReference>
<dbReference type="PDB" id="3QO3">
    <property type="method" value="X-ray"/>
    <property type="resolution" value="2.15 A"/>
    <property type="chains" value="A/B/C/D/E/F=1-65"/>
</dbReference>
<dbReference type="PDB" id="3RER">
    <property type="method" value="X-ray"/>
    <property type="resolution" value="1.70 A"/>
    <property type="chains" value="A/B/C/D/E/F=1-65"/>
</dbReference>
<dbReference type="PDB" id="3RES">
    <property type="method" value="X-ray"/>
    <property type="resolution" value="2.00 A"/>
    <property type="chains" value="A/B/C/D/E/F/G/H/I/J/K/L=1-65"/>
</dbReference>
<dbReference type="PDB" id="3VU3">
    <property type="method" value="X-ray"/>
    <property type="resolution" value="2.85 A"/>
    <property type="chains" value="C/D/E/F/G/H=1-102"/>
</dbReference>
<dbReference type="PDB" id="4JRI">
    <property type="method" value="X-ray"/>
    <property type="resolution" value="1.83 A"/>
    <property type="chains" value="A/B/C/D=2-69"/>
</dbReference>
<dbReference type="PDB" id="4JRK">
    <property type="method" value="X-ray"/>
    <property type="resolution" value="1.89 A"/>
    <property type="chains" value="A/B/C=2-69"/>
</dbReference>
<dbReference type="PDB" id="4JUV">
    <property type="method" value="X-ray"/>
    <property type="resolution" value="2.19 A"/>
    <property type="chains" value="A/B/C/D/E/F=2-69"/>
</dbReference>
<dbReference type="PDB" id="4RCB">
    <property type="method" value="X-ray"/>
    <property type="resolution" value="1.63 A"/>
    <property type="chains" value="A=5-71"/>
</dbReference>
<dbReference type="PDB" id="4RCC">
    <property type="method" value="X-ray"/>
    <property type="resolution" value="1.98 A"/>
    <property type="chains" value="A=5-71"/>
</dbReference>
<dbReference type="PDB" id="4V2S">
    <property type="method" value="X-ray"/>
    <property type="resolution" value="3.48 A"/>
    <property type="chains" value="A/B/C/D/E/F=1-102"/>
</dbReference>
<dbReference type="PDB" id="5NEW">
    <property type="method" value="X-ray"/>
    <property type="resolution" value="2.51 A"/>
    <property type="chains" value="A/B=1-102"/>
</dbReference>
<dbReference type="PDB" id="5UK7">
    <property type="method" value="X-ray"/>
    <property type="resolution" value="3.00 A"/>
    <property type="chains" value="A/B/C/D/E/F/G/H/I/J/K/L=2-69"/>
</dbReference>
<dbReference type="PDB" id="6BDG">
    <property type="method" value="X-ray"/>
    <property type="resolution" value="1.96 A"/>
    <property type="chains" value="A=7-70"/>
</dbReference>
<dbReference type="PDB" id="6QLB">
    <property type="method" value="X-ray"/>
    <property type="resolution" value="2.32 A"/>
    <property type="chains" value="E/F/G/H=4-65"/>
</dbReference>
<dbReference type="PDB" id="7OGM">
    <property type="method" value="EM"/>
    <property type="resolution" value="3.70 A"/>
    <property type="chains" value="D/E/F/I/J/K=1-102"/>
</dbReference>
<dbReference type="PDB" id="9GU5">
    <property type="method" value="X-ray"/>
    <property type="resolution" value="2.90 A"/>
    <property type="chains" value="A/B/C/D/E/F/G/H/I/J/K/L=1-102"/>
</dbReference>
<dbReference type="PDB" id="9H45">
    <property type="method" value="X-ray"/>
    <property type="resolution" value="2.08 A"/>
    <property type="chains" value="A/B/C/D/E/F=1-102"/>
</dbReference>
<dbReference type="PDBsum" id="1HK9"/>
<dbReference type="PDBsum" id="2Y90"/>
<dbReference type="PDBsum" id="2YHT"/>
<dbReference type="PDBsum" id="3GIB"/>
<dbReference type="PDBsum" id="3QHS"/>
<dbReference type="PDBsum" id="3QO3"/>
<dbReference type="PDBsum" id="3RER"/>
<dbReference type="PDBsum" id="3RES"/>
<dbReference type="PDBsum" id="3VU3"/>
<dbReference type="PDBsum" id="4JRI"/>
<dbReference type="PDBsum" id="4JRK"/>
<dbReference type="PDBsum" id="4JUV"/>
<dbReference type="PDBsum" id="4RCB"/>
<dbReference type="PDBsum" id="4RCC"/>
<dbReference type="PDBsum" id="4V2S"/>
<dbReference type="PDBsum" id="5NEW"/>
<dbReference type="PDBsum" id="5UK7"/>
<dbReference type="PDBsum" id="6BDG"/>
<dbReference type="PDBsum" id="6QLB"/>
<dbReference type="PDBsum" id="7OGM"/>
<dbReference type="PDBsum" id="9GU5"/>
<dbReference type="PDBsum" id="9H45"/>
<dbReference type="PCDDB" id="P0A6X3"/>
<dbReference type="SMR" id="P0A6X3"/>
<dbReference type="BioGRID" id="4261250">
    <property type="interactions" value="281"/>
</dbReference>
<dbReference type="DIP" id="DIP-36047N"/>
<dbReference type="FunCoup" id="P0A6X3">
    <property type="interactions" value="438"/>
</dbReference>
<dbReference type="IntAct" id="P0A6X3">
    <property type="interactions" value="78"/>
</dbReference>
<dbReference type="MINT" id="P0A6X3"/>
<dbReference type="STRING" id="511145.b4172"/>
<dbReference type="jPOST" id="P0A6X3"/>
<dbReference type="PaxDb" id="511145-b4172"/>
<dbReference type="EnsemblBacteria" id="AAC77129">
    <property type="protein sequence ID" value="AAC77129"/>
    <property type="gene ID" value="b4172"/>
</dbReference>
<dbReference type="GeneID" id="93777649"/>
<dbReference type="GeneID" id="948689"/>
<dbReference type="KEGG" id="ecj:JW4130"/>
<dbReference type="KEGG" id="eco:b4172"/>
<dbReference type="KEGG" id="ecoc:C3026_22545"/>
<dbReference type="PATRIC" id="fig|1411691.4.peg.2529"/>
<dbReference type="EchoBASE" id="EB0433"/>
<dbReference type="eggNOG" id="COG1923">
    <property type="taxonomic scope" value="Bacteria"/>
</dbReference>
<dbReference type="HOGENOM" id="CLU_113688_2_1_6"/>
<dbReference type="InParanoid" id="P0A6X3"/>
<dbReference type="OMA" id="QQMVYKH"/>
<dbReference type="OrthoDB" id="9799751at2"/>
<dbReference type="PhylomeDB" id="P0A6X3"/>
<dbReference type="BioCyc" id="EcoCyc:EG10438-MONOMER"/>
<dbReference type="EvolutionaryTrace" id="P0A6X3"/>
<dbReference type="PRO" id="PR:P0A6X3"/>
<dbReference type="Proteomes" id="UP000000625">
    <property type="component" value="Chromosome"/>
</dbReference>
<dbReference type="GO" id="GO:0043590">
    <property type="term" value="C:bacterial nucleoid"/>
    <property type="evidence" value="ECO:0000314"/>
    <property type="project" value="EcoCyc"/>
</dbReference>
<dbReference type="GO" id="GO:0005829">
    <property type="term" value="C:cytosol"/>
    <property type="evidence" value="ECO:0000314"/>
    <property type="project" value="EcoCyc"/>
</dbReference>
<dbReference type="GO" id="GO:0005524">
    <property type="term" value="F:ATP binding"/>
    <property type="evidence" value="ECO:0000314"/>
    <property type="project" value="EcoCyc"/>
</dbReference>
<dbReference type="GO" id="GO:0003681">
    <property type="term" value="F:bent DNA binding"/>
    <property type="evidence" value="ECO:0000314"/>
    <property type="project" value="EcoliWiki"/>
</dbReference>
<dbReference type="GO" id="GO:0003677">
    <property type="term" value="F:DNA binding"/>
    <property type="evidence" value="ECO:0000269"/>
    <property type="project" value="DisProt"/>
</dbReference>
<dbReference type="GO" id="GO:0003723">
    <property type="term" value="F:RNA binding"/>
    <property type="evidence" value="ECO:0000314"/>
    <property type="project" value="EcoCyc"/>
</dbReference>
<dbReference type="GO" id="GO:0140691">
    <property type="term" value="F:RNA folding chaperone"/>
    <property type="evidence" value="ECO:0000269"/>
    <property type="project" value="DisProt"/>
</dbReference>
<dbReference type="GO" id="GO:0000049">
    <property type="term" value="F:tRNA binding"/>
    <property type="evidence" value="ECO:0000314"/>
    <property type="project" value="EcoCyc"/>
</dbReference>
<dbReference type="GO" id="GO:0045975">
    <property type="term" value="P:positive regulation of translation, ncRNA-mediated"/>
    <property type="evidence" value="ECO:0000315"/>
    <property type="project" value="EcoCyc"/>
</dbReference>
<dbReference type="GO" id="GO:0006355">
    <property type="term" value="P:regulation of DNA-templated transcription"/>
    <property type="evidence" value="ECO:0007669"/>
    <property type="project" value="InterPro"/>
</dbReference>
<dbReference type="GO" id="GO:0043487">
    <property type="term" value="P:regulation of RNA stability"/>
    <property type="evidence" value="ECO:0000318"/>
    <property type="project" value="GO_Central"/>
</dbReference>
<dbReference type="GO" id="GO:0045974">
    <property type="term" value="P:regulation of translation, ncRNA-mediated"/>
    <property type="evidence" value="ECO:0000318"/>
    <property type="project" value="GO_Central"/>
</dbReference>
<dbReference type="GO" id="GO:0040033">
    <property type="term" value="P:sRNA-mediated post-transcriptional gene silencing"/>
    <property type="evidence" value="ECO:0000270"/>
    <property type="project" value="EcoliWiki"/>
</dbReference>
<dbReference type="GO" id="GO:0008033">
    <property type="term" value="P:tRNA processing"/>
    <property type="evidence" value="ECO:0000314"/>
    <property type="project" value="EcoCyc"/>
</dbReference>
<dbReference type="CDD" id="cd01716">
    <property type="entry name" value="Hfq"/>
    <property type="match status" value="1"/>
</dbReference>
<dbReference type="DisProt" id="DP01050"/>
<dbReference type="FunFam" id="2.30.30.100:FF:000001">
    <property type="entry name" value="RNA-binding protein Hfq"/>
    <property type="match status" value="1"/>
</dbReference>
<dbReference type="Gene3D" id="2.30.30.100">
    <property type="match status" value="1"/>
</dbReference>
<dbReference type="HAMAP" id="MF_00436">
    <property type="entry name" value="Hfq"/>
    <property type="match status" value="1"/>
</dbReference>
<dbReference type="InterPro" id="IPR005001">
    <property type="entry name" value="Hfq"/>
</dbReference>
<dbReference type="InterPro" id="IPR010920">
    <property type="entry name" value="LSM_dom_sf"/>
</dbReference>
<dbReference type="InterPro" id="IPR047575">
    <property type="entry name" value="Sm"/>
</dbReference>
<dbReference type="NCBIfam" id="TIGR02383">
    <property type="entry name" value="Hfq"/>
    <property type="match status" value="1"/>
</dbReference>
<dbReference type="NCBIfam" id="NF001602">
    <property type="entry name" value="PRK00395.1"/>
    <property type="match status" value="1"/>
</dbReference>
<dbReference type="PANTHER" id="PTHR34772">
    <property type="entry name" value="RNA-BINDING PROTEIN HFQ"/>
    <property type="match status" value="1"/>
</dbReference>
<dbReference type="PANTHER" id="PTHR34772:SF1">
    <property type="entry name" value="RNA-BINDING PROTEIN HFQ"/>
    <property type="match status" value="1"/>
</dbReference>
<dbReference type="Pfam" id="PF17209">
    <property type="entry name" value="Hfq"/>
    <property type="match status" value="1"/>
</dbReference>
<dbReference type="SUPFAM" id="SSF50182">
    <property type="entry name" value="Sm-like ribonucleoproteins"/>
    <property type="match status" value="1"/>
</dbReference>
<dbReference type="PROSITE" id="PS52002">
    <property type="entry name" value="SM"/>
    <property type="match status" value="1"/>
</dbReference>
<protein>
    <recommendedName>
        <fullName evidence="1">RNA-binding protein Hfq</fullName>
    </recommendedName>
    <alternativeName>
        <fullName>HF-1</fullName>
    </alternativeName>
    <alternativeName>
        <fullName>Host factor-I protein</fullName>
        <shortName>HF-I</shortName>
    </alternativeName>
</protein>
<evidence type="ECO:0000255" key="1">
    <source>
        <dbReference type="HAMAP-Rule" id="MF_00436"/>
    </source>
</evidence>
<evidence type="ECO:0000255" key="2">
    <source>
        <dbReference type="PROSITE-ProRule" id="PRU01346"/>
    </source>
</evidence>
<evidence type="ECO:0000256" key="3">
    <source>
        <dbReference type="SAM" id="MobiDB-lite"/>
    </source>
</evidence>
<evidence type="ECO:0000269" key="4">
    <source>
    </source>
</evidence>
<evidence type="ECO:0000269" key="5">
    <source>
    </source>
</evidence>
<evidence type="ECO:0000269" key="6">
    <source>
    </source>
</evidence>
<evidence type="ECO:0000269" key="7">
    <source>
    </source>
</evidence>
<evidence type="ECO:0000269" key="8">
    <source>
    </source>
</evidence>
<evidence type="ECO:0000269" key="9">
    <source>
    </source>
</evidence>
<evidence type="ECO:0000269" key="10">
    <source>
    </source>
</evidence>
<evidence type="ECO:0000269" key="11">
    <source>
    </source>
</evidence>
<evidence type="ECO:0000269" key="12">
    <source>
    </source>
</evidence>
<evidence type="ECO:0000269" key="13">
    <source>
    </source>
</evidence>
<evidence type="ECO:0000305" key="14"/>
<evidence type="ECO:0007829" key="15">
    <source>
        <dbReference type="PDB" id="4RCB"/>
    </source>
</evidence>
<comment type="function">
    <text evidence="4 6 7 8 10 12">RNA chaperone that binds small regulatory RNA (sRNAs) and mRNAs to facilitate mRNA translational regulation in response to envelope stress, environmental stress and changes in metabolite concentrations. Involved in the regulation of stress responses mediated by the sigma factors RpoS, sigma-E and sigma-32 (PubMed:17158661). Binds with high specificity to tRNAs (PubMed:18230766). Binds sRNA antitoxin RalA (PubMed:24748661). In vitro, stimulates synthesis of long tails by poly(A) polymerase I (PubMed:10677490). Required for RNA phage Qbeta replication (PubMed:805130). Seems to play a role in persister cell formation; upon overexpression decreases persister cell formation while deletion increases persister formation (PubMed:19909729).</text>
</comment>
<comment type="activity regulation">
    <text evidence="11">Forms condensates in vivo, both in the absence and presence of stress, which differ in their material state (PubMed:36577380). Hfq condensation has no impact on transcription but seems important for the roles of Hfq as an mRNA chaperone at the post-transcriptional level (PubMed:36577380). Hfq condensation also appears important for its role as an sRNA stabilizer (PubMed:36577380).</text>
</comment>
<comment type="subunit">
    <text evidence="1 5 9">Homohexamer (PubMed:12853626). Interacts with H-NS (PubMed:11222598).</text>
</comment>
<comment type="interaction">
    <interactant intactId="EBI-547637">
        <id>P0A6X3</id>
    </interactant>
    <interactant intactId="EBI-545468">
        <id>P0AG30</id>
        <label>rho</label>
    </interactant>
    <organismsDiffer>false</organismsDiffer>
    <experiments>5</experiments>
</comment>
<comment type="subcellular location">
    <subcellularLocation>
        <location evidence="11">Cytoplasm</location>
    </subcellularLocation>
    <text evidence="11">Localizes along a helical path in unstressed cells and relocates to the cell poles under certain stress conditions such as osmotic stress and nutrient deprivation (PubMed:36577380). Forms cytoplasmic or polar condensates under normal or stress conditions, respectively (PubMed:36577380). Localization to the cell poles and formation of the condensates depend on the pole-localizer protein TmaR (PubMed:36577380). RNA molecules also contribute to Hfq condensate formation (PubMed:36577380).</text>
</comment>
<comment type="disruption phenotype">
    <text evidence="8 10">Deletion of hfq seems to lead to a significant translational fidelity problem. Deletion increases persister cell formation (PubMed:19909729). Deletion abolishes the antitoxin activity of sRNA antitoxin RalA, preventing it from neutralizing toxin RalR (PubMed:24748661).</text>
</comment>
<comment type="similarity">
    <text evidence="1">Belongs to the Hfq family.</text>
</comment>
<comment type="sequence caution" evidence="14">
    <conflict type="frameshift">
        <sequence resource="EMBL-CDS" id="AAA24175"/>
    </conflict>
</comment>
<feature type="initiator methionine" description="Removed" evidence="9 12 13">
    <location>
        <position position="1"/>
    </location>
</feature>
<feature type="chain" id="PRO_0000095601" description="RNA-binding protein Hfq">
    <location>
        <begin position="2"/>
        <end position="102"/>
    </location>
</feature>
<feature type="domain" description="Sm" evidence="2">
    <location>
        <begin position="9"/>
        <end position="68"/>
    </location>
</feature>
<feature type="region of interest" description="Disordered" evidence="3">
    <location>
        <begin position="63"/>
        <end position="102"/>
    </location>
</feature>
<feature type="compositionally biased region" description="Polar residues" evidence="3">
    <location>
        <begin position="70"/>
        <end position="96"/>
    </location>
</feature>
<feature type="mutagenesis site" description="No effect on Hfq condensate formation in both growing and late stationary phases." evidence="11">
    <original>Q</original>
    <variation>A</variation>
    <location>
        <position position="8"/>
    </location>
</feature>
<feature type="mutagenesis site" description="No effect on Hfq condensate formation in both growing and late stationary phases." evidence="11">
    <original>D</original>
    <variation>A</variation>
    <location>
        <position position="9"/>
    </location>
</feature>
<feature type="mutagenesis site" description="Almost completely disrupts the ability of Hfq to form condensates in both growing and late stationary phases." evidence="11">
    <original>R</original>
    <variation>A</variation>
    <location>
        <position position="16"/>
    </location>
</feature>
<feature type="mutagenesis site" description="Almost completely disrupts the ability of Hfq to form condensates in both growing and late stationary phases." evidence="11">
    <original>R</original>
    <variation>A</variation>
    <location>
        <position position="19"/>
    </location>
</feature>
<feature type="mutagenesis site" description="Almost completely disrupts the ability of Hfq to form condensates in both growing and late stationary phases." evidence="11">
    <original>Y</original>
    <variation>D</variation>
    <location>
        <position position="25"/>
    </location>
</feature>
<feature type="mutagenesis site" description="Almost completely disrupts the ability of Hfq to form condensates in both growing and late stationary phases." evidence="11">
    <original>K</original>
    <variation>A</variation>
    <location>
        <position position="31"/>
    </location>
</feature>
<feature type="helix" evidence="15">
    <location>
        <begin position="8"/>
        <end position="17"/>
    </location>
</feature>
<feature type="strand" evidence="15">
    <location>
        <begin position="22"/>
        <end position="26"/>
    </location>
</feature>
<feature type="strand" evidence="15">
    <location>
        <begin position="31"/>
        <end position="39"/>
    </location>
</feature>
<feature type="strand" evidence="15">
    <location>
        <begin position="41"/>
        <end position="55"/>
    </location>
</feature>
<feature type="helix" evidence="15">
    <location>
        <begin position="56"/>
        <end position="58"/>
    </location>
</feature>
<feature type="strand" evidence="15">
    <location>
        <begin position="59"/>
        <end position="66"/>
    </location>
</feature>
<gene>
    <name evidence="1" type="primary">hfq</name>
    <name type="ordered locus">b4172</name>
    <name type="ordered locus">JW4130</name>
</gene>
<sequence>MAKGQSLQDPFLNALRRERVPVSIYLVNGIKLQGQIESFDQFVILLKNTVSQMVYKHAISTVVPSRPVSHHSNNAGGGTSSNYHHGSSAQNTSAQQDSEETE</sequence>
<organism>
    <name type="scientific">Escherichia coli (strain K12)</name>
    <dbReference type="NCBI Taxonomy" id="83333"/>
    <lineage>
        <taxon>Bacteria</taxon>
        <taxon>Pseudomonadati</taxon>
        <taxon>Pseudomonadota</taxon>
        <taxon>Gammaproteobacteria</taxon>
        <taxon>Enterobacterales</taxon>
        <taxon>Enterobacteriaceae</taxon>
        <taxon>Escherichia</taxon>
    </lineage>
</organism>
<reference key="1">
    <citation type="journal article" date="1991" name="Nucleic Acids Res.">
        <title>Identification and sequence determination of the host factor gene for bacteriophage Q beta.</title>
        <authorList>
            <person name="Kajitani M."/>
            <person name="Ishihama A."/>
        </authorList>
    </citation>
    <scope>NUCLEOTIDE SEQUENCE [GENOMIC DNA]</scope>
    <scope>PROTEIN SEQUENCE OF 2-45</scope>
    <scope>SUBUNIT</scope>
</reference>
<reference key="2">
    <citation type="journal article" date="1995" name="Nucleic Acids Res.">
        <title>Analysis of the Escherichia coli genome VI: DNA sequence of the region from 92.8 through 100 minutes.</title>
        <authorList>
            <person name="Burland V.D."/>
            <person name="Plunkett G. III"/>
            <person name="Sofia H.J."/>
            <person name="Daniels D.L."/>
            <person name="Blattner F.R."/>
        </authorList>
    </citation>
    <scope>NUCLEOTIDE SEQUENCE [LARGE SCALE GENOMIC DNA]</scope>
    <source>
        <strain>K12 / MG1655 / ATCC 47076</strain>
    </source>
</reference>
<reference key="3">
    <citation type="journal article" date="1997" name="Science">
        <title>The complete genome sequence of Escherichia coli K-12.</title>
        <authorList>
            <person name="Blattner F.R."/>
            <person name="Plunkett G. III"/>
            <person name="Bloch C.A."/>
            <person name="Perna N.T."/>
            <person name="Burland V."/>
            <person name="Riley M."/>
            <person name="Collado-Vides J."/>
            <person name="Glasner J.D."/>
            <person name="Rode C.K."/>
            <person name="Mayhew G.F."/>
            <person name="Gregor J."/>
            <person name="Davis N.W."/>
            <person name="Kirkpatrick H.A."/>
            <person name="Goeden M.A."/>
            <person name="Rose D.J."/>
            <person name="Mau B."/>
            <person name="Shao Y."/>
        </authorList>
    </citation>
    <scope>NUCLEOTIDE SEQUENCE [LARGE SCALE GENOMIC DNA]</scope>
    <source>
        <strain>K12 / MG1655 / ATCC 47076</strain>
    </source>
</reference>
<reference key="4">
    <citation type="journal article" date="2006" name="Mol. Syst. Biol.">
        <title>Highly accurate genome sequences of Escherichia coli K-12 strains MG1655 and W3110.</title>
        <authorList>
            <person name="Hayashi K."/>
            <person name="Morooka N."/>
            <person name="Yamamoto Y."/>
            <person name="Fujita K."/>
            <person name="Isono K."/>
            <person name="Choi S."/>
            <person name="Ohtsubo E."/>
            <person name="Baba T."/>
            <person name="Wanner B.L."/>
            <person name="Mori H."/>
            <person name="Horiuchi T."/>
        </authorList>
    </citation>
    <scope>NUCLEOTIDE SEQUENCE [LARGE SCALE GENOMIC DNA]</scope>
    <source>
        <strain>K12 / W3110 / ATCC 27325 / DSM 5911</strain>
    </source>
</reference>
<reference key="5">
    <citation type="journal article" date="1991" name="J. Bacteriol.">
        <title>Structure of Escherichia coli K-12 miaA and characterization of the mutator phenotype caused by miaA insertion mutations.</title>
        <authorList>
            <person name="Winkler M.E."/>
            <person name="Connolly D.M."/>
        </authorList>
    </citation>
    <scope>NUCLEOTIDE SEQUENCE [GENOMIC DNA] OF 1-79</scope>
    <source>
        <strain>K12</strain>
    </source>
</reference>
<reference key="6">
    <citation type="journal article" date="1993" name="Proc. Natl. Acad. Sci. U.S.A.">
        <title>The Escherichia coli hflA locus encodes a putative GTP-binding protein and two membrane proteins, one of which contains a protease-like domain.</title>
        <authorList>
            <person name="Noble J.A."/>
            <person name="Innis M.A."/>
            <person name="Koonin E.V."/>
            <person name="Rudd K.E."/>
            <person name="Banuett F."/>
            <person name="Herskowitz I."/>
        </authorList>
    </citation>
    <scope>NUCLEOTIDE SEQUENCE [GENOMIC DNA] OF 89-102</scope>
    <source>
        <strain>K12</strain>
    </source>
</reference>
<reference key="7">
    <citation type="journal article" date="1997" name="Biochem. Biophys. Res. Commun.">
        <title>DNA binding properties of the hfq gene product of Escherichia coli.</title>
        <authorList>
            <person name="Takada A."/>
            <person name="Wachi M."/>
            <person name="Kaidow A."/>
            <person name="Takamura M."/>
            <person name="Nagai K."/>
        </authorList>
    </citation>
    <scope>PROTEIN SEQUENCE OF 2-19</scope>
    <scope>DNA-BINDING</scope>
</reference>
<reference key="8">
    <citation type="journal article" date="1975" name="J. Biol. Chem.">
        <title>The host factor required for RNA phage Qbeta RNA replication in vitro. Intracellular location, quantitation, and purification by polyadenylate-cellulose chromatography.</title>
        <authorList>
            <person name="Carmichael G.G."/>
            <person name="Weber K."/>
            <person name="Niveleau A."/>
            <person name="Wahba A.J."/>
        </authorList>
    </citation>
    <scope>PROTEIN SEQUENCE OF 2-6</scope>
    <scope>ROLE IN PHAGE QBETA REPLICATION</scope>
</reference>
<reference key="9">
    <citation type="journal article" date="2000" name="Proc. Natl. Acad. Sci. U.S.A.">
        <title>Host factor Hfq of Escherichia coli stimulates elongation of poly(A) tails by poly(A) polymerase I.</title>
        <authorList>
            <person name="Hajnsdorf E."/>
            <person name="Regnier P."/>
        </authorList>
    </citation>
    <scope>ROLE IN ELONGATION OF MRNA POLY(A) TAILS</scope>
</reference>
<reference key="10">
    <citation type="journal article" date="2001" name="J. Bacteriol.">
        <title>Hfq is necessary for regulation by the untranslated RNA DsrA.</title>
        <authorList>
            <person name="Sledjeski D.D."/>
            <person name="Whitman C."/>
            <person name="Zhang A."/>
        </authorList>
    </citation>
    <scope>FUNCTION IN REGULATORY ACTIVITY OF DSRA</scope>
</reference>
<reference key="11">
    <citation type="journal article" date="2007" name="J. Bacteriol.">
        <title>Hfq modulates the sigmaE-mediated envelope stress response and the sigma32-mediated cytoplasmic stress response in Escherichia coli.</title>
        <authorList>
            <person name="Guisbert E."/>
            <person name="Rhodius V.A."/>
            <person name="Ahuja N."/>
            <person name="Witkin E."/>
            <person name="Gross C.A."/>
        </authorList>
    </citation>
    <scope>FUNCTION IN REGULATION OF STRESS RESPONSE</scope>
</reference>
<reference key="12">
    <citation type="journal article" date="2008" name="RNA">
        <title>The RNA binding protein Hfq interacts specifically with tRNAs.</title>
        <authorList>
            <person name="Lee T."/>
            <person name="Feig A.L."/>
        </authorList>
    </citation>
    <scope>INTERACTION WITH TRNAS</scope>
    <source>
        <strain>K12</strain>
    </source>
</reference>
<reference key="13">
    <citation type="journal article" date="2010" name="Biochem. Biophys. Res. Commun.">
        <title>Toxins Hha and CspD and small RNA regulator Hfq are involved in persister cell formation through MqsR in Escherichia coli.</title>
        <authorList>
            <person name="Kim Y."/>
            <person name="Wood T.K."/>
        </authorList>
    </citation>
    <scope>FUNCTION IN PERSISTER CELL FORMATION</scope>
    <scope>DISRUPTION PHENOTYPE</scope>
    <source>
        <strain>K12 / BW25113</strain>
    </source>
</reference>
<reference key="14">
    <citation type="journal article" date="2014" name="Nucleic Acids Res.">
        <title>RalR (a DNase) and RalA (a small RNA) form a type I toxin-antitoxin system in Escherichia coli.</title>
        <authorList>
            <person name="Guo Y."/>
            <person name="Quiroga C."/>
            <person name="Chen Q."/>
            <person name="McAnulty M.J."/>
            <person name="Benedik M.J."/>
            <person name="Wood T.K."/>
            <person name="Wang X."/>
        </authorList>
    </citation>
    <scope>FUNCTION</scope>
    <scope>DISRUPTION PHENOTYPE</scope>
    <scope>RNA-BINDING</scope>
    <source>
        <strain>K12 / BW25113</strain>
    </source>
</reference>
<reference key="15">
    <citation type="journal article" date="2022" name="Cell Rep.">
        <title>Heterotypic phase separation of Hfq is linked to its roles as an RNA chaperone.</title>
        <authorList>
            <person name="Goldberger O."/>
            <person name="Szoke T."/>
            <person name="Nussbaum-Shochat A."/>
            <person name="Amster-Choder O."/>
        </authorList>
    </citation>
    <scope>ACTIVITY REGULATION</scope>
    <scope>SUBCELLULAR LOCATION</scope>
    <scope>MUTAGENESIS OF GLN-8; ASP-9; ARG-16; ARG-19; TYR-25 AND LYS-31</scope>
    <source>
        <strain>K12 / MG1655 / ATCC 47076</strain>
    </source>
</reference>
<reference key="16">
    <citation type="journal article" date="2003" name="Nucleic Acids Res.">
        <title>Sm-like proteins in Eubacteria: the crystal structure of the Hfq protein from Escherichia coli.</title>
        <authorList>
            <person name="Sauter C."/>
            <person name="Basquin J."/>
            <person name="Suck D."/>
        </authorList>
    </citation>
    <scope>X-RAY CRYSTALLOGRAPHY (2.15 ANGSTROMS) OF 1-72</scope>
    <scope>SUBUNIT</scope>
</reference>
<proteinExistence type="evidence at protein level"/>
<accession>P0A6X3</accession>
<accession>O24728</accession>
<accession>P25521</accession>
<accession>Q2M6D3</accession>
<accession>Q47383</accession>